<gene>
    <name type="primary">ade7</name>
    <name type="ORF">SPBC409.10</name>
</gene>
<name>PUR7_SCHPO</name>
<proteinExistence type="inferred from homology"/>
<keyword id="KW-0067">ATP-binding</keyword>
<keyword id="KW-0436">Ligase</keyword>
<keyword id="KW-0547">Nucleotide-binding</keyword>
<keyword id="KW-0658">Purine biosynthesis</keyword>
<keyword id="KW-1185">Reference proteome</keyword>
<feature type="chain" id="PRO_0000100928" description="Phosphoribosylaminoimidazole-succinocarboxamide synthase">
    <location>
        <begin position="1"/>
        <end position="299"/>
    </location>
</feature>
<sequence>MALLKTSLDAPFTKIATGKVRDLYECVEFPDDLLFVATDRISAYDFIMENGIPEKGKVLTKISEFWFDVLKPHVQTHLITSRWEELPPVITKHEELKDRSMLVKKYKILPIEAIVRGYITGSAWKEYQKQGTVHGLNVPTGMKEAEAFPEPLFTPSTKAAEGHDENIHPDEVSKIVGPELAKQVAETSVKLYKIARDVALKKGIIIADTKFEFGVDETTNKIVLVDEVLTPDSSRFWLASDYTVGKSPDSFDKQYLRNWLTANNLANKPNVSLPEDVVEATRRKYVEAYEMITGKKWSY</sequence>
<reference key="1">
    <citation type="journal article" date="2002" name="Nature">
        <title>The genome sequence of Schizosaccharomyces pombe.</title>
        <authorList>
            <person name="Wood V."/>
            <person name="Gwilliam R."/>
            <person name="Rajandream M.A."/>
            <person name="Lyne M.H."/>
            <person name="Lyne R."/>
            <person name="Stewart A."/>
            <person name="Sgouros J.G."/>
            <person name="Peat N."/>
            <person name="Hayles J."/>
            <person name="Baker S.G."/>
            <person name="Basham D."/>
            <person name="Bowman S."/>
            <person name="Brooks K."/>
            <person name="Brown D."/>
            <person name="Brown S."/>
            <person name="Chillingworth T."/>
            <person name="Churcher C.M."/>
            <person name="Collins M."/>
            <person name="Connor R."/>
            <person name="Cronin A."/>
            <person name="Davis P."/>
            <person name="Feltwell T."/>
            <person name="Fraser A."/>
            <person name="Gentles S."/>
            <person name="Goble A."/>
            <person name="Hamlin N."/>
            <person name="Harris D.E."/>
            <person name="Hidalgo J."/>
            <person name="Hodgson G."/>
            <person name="Holroyd S."/>
            <person name="Hornsby T."/>
            <person name="Howarth S."/>
            <person name="Huckle E.J."/>
            <person name="Hunt S."/>
            <person name="Jagels K."/>
            <person name="James K.D."/>
            <person name="Jones L."/>
            <person name="Jones M."/>
            <person name="Leather S."/>
            <person name="McDonald S."/>
            <person name="McLean J."/>
            <person name="Mooney P."/>
            <person name="Moule S."/>
            <person name="Mungall K.L."/>
            <person name="Murphy L.D."/>
            <person name="Niblett D."/>
            <person name="Odell C."/>
            <person name="Oliver K."/>
            <person name="O'Neil S."/>
            <person name="Pearson D."/>
            <person name="Quail M.A."/>
            <person name="Rabbinowitsch E."/>
            <person name="Rutherford K.M."/>
            <person name="Rutter S."/>
            <person name="Saunders D."/>
            <person name="Seeger K."/>
            <person name="Sharp S."/>
            <person name="Skelton J."/>
            <person name="Simmonds M.N."/>
            <person name="Squares R."/>
            <person name="Squares S."/>
            <person name="Stevens K."/>
            <person name="Taylor K."/>
            <person name="Taylor R.G."/>
            <person name="Tivey A."/>
            <person name="Walsh S.V."/>
            <person name="Warren T."/>
            <person name="Whitehead S."/>
            <person name="Woodward J.R."/>
            <person name="Volckaert G."/>
            <person name="Aert R."/>
            <person name="Robben J."/>
            <person name="Grymonprez B."/>
            <person name="Weltjens I."/>
            <person name="Vanstreels E."/>
            <person name="Rieger M."/>
            <person name="Schaefer M."/>
            <person name="Mueller-Auer S."/>
            <person name="Gabel C."/>
            <person name="Fuchs M."/>
            <person name="Duesterhoeft A."/>
            <person name="Fritzc C."/>
            <person name="Holzer E."/>
            <person name="Moestl D."/>
            <person name="Hilbert H."/>
            <person name="Borzym K."/>
            <person name="Langer I."/>
            <person name="Beck A."/>
            <person name="Lehrach H."/>
            <person name="Reinhardt R."/>
            <person name="Pohl T.M."/>
            <person name="Eger P."/>
            <person name="Zimmermann W."/>
            <person name="Wedler H."/>
            <person name="Wambutt R."/>
            <person name="Purnelle B."/>
            <person name="Goffeau A."/>
            <person name="Cadieu E."/>
            <person name="Dreano S."/>
            <person name="Gloux S."/>
            <person name="Lelaure V."/>
            <person name="Mottier S."/>
            <person name="Galibert F."/>
            <person name="Aves S.J."/>
            <person name="Xiang Z."/>
            <person name="Hunt C."/>
            <person name="Moore K."/>
            <person name="Hurst S.M."/>
            <person name="Lucas M."/>
            <person name="Rochet M."/>
            <person name="Gaillardin C."/>
            <person name="Tallada V.A."/>
            <person name="Garzon A."/>
            <person name="Thode G."/>
            <person name="Daga R.R."/>
            <person name="Cruzado L."/>
            <person name="Jimenez J."/>
            <person name="Sanchez M."/>
            <person name="del Rey F."/>
            <person name="Benito J."/>
            <person name="Dominguez A."/>
            <person name="Revuelta J.L."/>
            <person name="Moreno S."/>
            <person name="Armstrong J."/>
            <person name="Forsburg S.L."/>
            <person name="Cerutti L."/>
            <person name="Lowe T."/>
            <person name="McCombie W.R."/>
            <person name="Paulsen I."/>
            <person name="Potashkin J."/>
            <person name="Shpakovski G.V."/>
            <person name="Ussery D."/>
            <person name="Barrell B.G."/>
            <person name="Nurse P."/>
        </authorList>
    </citation>
    <scope>NUCLEOTIDE SEQUENCE [LARGE SCALE GENOMIC DNA]</scope>
    <source>
        <strain>972 / ATCC 24843</strain>
    </source>
</reference>
<accession>Q9UUB4</accession>
<organism>
    <name type="scientific">Schizosaccharomyces pombe (strain 972 / ATCC 24843)</name>
    <name type="common">Fission yeast</name>
    <dbReference type="NCBI Taxonomy" id="284812"/>
    <lineage>
        <taxon>Eukaryota</taxon>
        <taxon>Fungi</taxon>
        <taxon>Dikarya</taxon>
        <taxon>Ascomycota</taxon>
        <taxon>Taphrinomycotina</taxon>
        <taxon>Schizosaccharomycetes</taxon>
        <taxon>Schizosaccharomycetales</taxon>
        <taxon>Schizosaccharomycetaceae</taxon>
        <taxon>Schizosaccharomyces</taxon>
    </lineage>
</organism>
<comment type="catalytic activity">
    <reaction>
        <text>5-amino-1-(5-phospho-D-ribosyl)imidazole-4-carboxylate + L-aspartate + ATP = (2S)-2-[5-amino-1-(5-phospho-beta-D-ribosyl)imidazole-4-carboxamido]succinate + ADP + phosphate + 2 H(+)</text>
        <dbReference type="Rhea" id="RHEA:22628"/>
        <dbReference type="ChEBI" id="CHEBI:15378"/>
        <dbReference type="ChEBI" id="CHEBI:29991"/>
        <dbReference type="ChEBI" id="CHEBI:30616"/>
        <dbReference type="ChEBI" id="CHEBI:43474"/>
        <dbReference type="ChEBI" id="CHEBI:58443"/>
        <dbReference type="ChEBI" id="CHEBI:77657"/>
        <dbReference type="ChEBI" id="CHEBI:456216"/>
        <dbReference type="EC" id="6.3.2.6"/>
    </reaction>
</comment>
<comment type="pathway">
    <text>Purine metabolism; IMP biosynthesis via de novo pathway; 5-amino-1-(5-phospho-D-ribosyl)imidazole-4-carboxamide from 5-amino-1-(5-phospho-D-ribosyl)imidazole-4-carboxylate: step 1/2.</text>
</comment>
<comment type="similarity">
    <text evidence="1">Belongs to the SAICAR synthetase family.</text>
</comment>
<protein>
    <recommendedName>
        <fullName>Phosphoribosylaminoimidazole-succinocarboxamide synthase</fullName>
        <ecNumber>6.3.2.6</ecNumber>
    </recommendedName>
    <alternativeName>
        <fullName>SAICAR synthetase</fullName>
    </alternativeName>
</protein>
<evidence type="ECO:0000305" key="1"/>
<dbReference type="EC" id="6.3.2.6"/>
<dbReference type="EMBL" id="CU329671">
    <property type="protein sequence ID" value="CAB52612.1"/>
    <property type="molecule type" value="Genomic_DNA"/>
</dbReference>
<dbReference type="PIR" id="T40437">
    <property type="entry name" value="T40437"/>
</dbReference>
<dbReference type="RefSeq" id="NP_595460.1">
    <property type="nucleotide sequence ID" value="NM_001021370.2"/>
</dbReference>
<dbReference type="SMR" id="Q9UUB4"/>
<dbReference type="BioGRID" id="277544">
    <property type="interactions" value="8"/>
</dbReference>
<dbReference type="FunCoup" id="Q9UUB4">
    <property type="interactions" value="426"/>
</dbReference>
<dbReference type="STRING" id="284812.Q9UUB4"/>
<dbReference type="iPTMnet" id="Q9UUB4"/>
<dbReference type="PaxDb" id="4896-SPBC409.10.1"/>
<dbReference type="EnsemblFungi" id="SPBC409.10.1">
    <property type="protein sequence ID" value="SPBC409.10.1:pep"/>
    <property type="gene ID" value="SPBC409.10"/>
</dbReference>
<dbReference type="GeneID" id="2541029"/>
<dbReference type="KEGG" id="spo:2541029"/>
<dbReference type="PomBase" id="SPBC409.10">
    <property type="gene designation" value="ade7"/>
</dbReference>
<dbReference type="VEuPathDB" id="FungiDB:SPBC409.10"/>
<dbReference type="eggNOG" id="KOG2835">
    <property type="taxonomic scope" value="Eukaryota"/>
</dbReference>
<dbReference type="HOGENOM" id="CLU_045637_0_2_1"/>
<dbReference type="InParanoid" id="Q9UUB4"/>
<dbReference type="OMA" id="CEPFKVE"/>
<dbReference type="PhylomeDB" id="Q9UUB4"/>
<dbReference type="UniPathway" id="UPA00074">
    <property type="reaction ID" value="UER00131"/>
</dbReference>
<dbReference type="PRO" id="PR:Q9UUB4"/>
<dbReference type="Proteomes" id="UP000002485">
    <property type="component" value="Chromosome II"/>
</dbReference>
<dbReference type="GO" id="GO:0005829">
    <property type="term" value="C:cytosol"/>
    <property type="evidence" value="ECO:0007005"/>
    <property type="project" value="PomBase"/>
</dbReference>
<dbReference type="GO" id="GO:0005634">
    <property type="term" value="C:nucleus"/>
    <property type="evidence" value="ECO:0007005"/>
    <property type="project" value="PomBase"/>
</dbReference>
<dbReference type="GO" id="GO:0005524">
    <property type="term" value="F:ATP binding"/>
    <property type="evidence" value="ECO:0007669"/>
    <property type="project" value="UniProtKB-KW"/>
</dbReference>
<dbReference type="GO" id="GO:0004639">
    <property type="term" value="F:phosphoribosylaminoimidazolesuccinocarboxamide synthase activity"/>
    <property type="evidence" value="ECO:0000314"/>
    <property type="project" value="PomBase"/>
</dbReference>
<dbReference type="GO" id="GO:0006189">
    <property type="term" value="P:'de novo' IMP biosynthetic process"/>
    <property type="evidence" value="ECO:0000318"/>
    <property type="project" value="GO_Central"/>
</dbReference>
<dbReference type="GO" id="GO:0046084">
    <property type="term" value="P:adenine biosynthetic process"/>
    <property type="evidence" value="ECO:0000315"/>
    <property type="project" value="PomBase"/>
</dbReference>
<dbReference type="GO" id="GO:0009152">
    <property type="term" value="P:purine ribonucleotide biosynthetic process"/>
    <property type="evidence" value="ECO:0000314"/>
    <property type="project" value="PomBase"/>
</dbReference>
<dbReference type="CDD" id="cd01414">
    <property type="entry name" value="SAICAR_synt_Sc"/>
    <property type="match status" value="1"/>
</dbReference>
<dbReference type="FunFam" id="3.30.200.20:FF:000392">
    <property type="entry name" value="Phosphoribosylaminoimidazole-succinocarboxamide synthase"/>
    <property type="match status" value="1"/>
</dbReference>
<dbReference type="FunFam" id="3.30.470.20:FF:000015">
    <property type="entry name" value="Phosphoribosylaminoimidazole-succinocarboxamide synthase"/>
    <property type="match status" value="1"/>
</dbReference>
<dbReference type="Gene3D" id="3.30.470.20">
    <property type="entry name" value="ATP-grasp fold, B domain"/>
    <property type="match status" value="1"/>
</dbReference>
<dbReference type="Gene3D" id="3.30.200.20">
    <property type="entry name" value="Phosphorylase Kinase, domain 1"/>
    <property type="match status" value="1"/>
</dbReference>
<dbReference type="HAMAP" id="MF_00137">
    <property type="entry name" value="SAICAR_synth"/>
    <property type="match status" value="1"/>
</dbReference>
<dbReference type="InterPro" id="IPR028923">
    <property type="entry name" value="SAICAR_synt/ADE2_N"/>
</dbReference>
<dbReference type="InterPro" id="IPR001636">
    <property type="entry name" value="SAICAR_synth"/>
</dbReference>
<dbReference type="InterPro" id="IPR018236">
    <property type="entry name" value="SAICAR_synthetase_CS"/>
</dbReference>
<dbReference type="NCBIfam" id="NF010568">
    <property type="entry name" value="PRK13961.1"/>
    <property type="match status" value="1"/>
</dbReference>
<dbReference type="NCBIfam" id="TIGR00081">
    <property type="entry name" value="purC"/>
    <property type="match status" value="1"/>
</dbReference>
<dbReference type="PANTHER" id="PTHR43700">
    <property type="entry name" value="PHOSPHORIBOSYLAMINOIMIDAZOLE-SUCCINOCARBOXAMIDE SYNTHASE"/>
    <property type="match status" value="1"/>
</dbReference>
<dbReference type="PANTHER" id="PTHR43700:SF1">
    <property type="entry name" value="PHOSPHORIBOSYLAMINOIMIDAZOLE-SUCCINOCARBOXAMIDE SYNTHASE"/>
    <property type="match status" value="1"/>
</dbReference>
<dbReference type="Pfam" id="PF01259">
    <property type="entry name" value="SAICAR_synt"/>
    <property type="match status" value="1"/>
</dbReference>
<dbReference type="SUPFAM" id="SSF56104">
    <property type="entry name" value="SAICAR synthase-like"/>
    <property type="match status" value="1"/>
</dbReference>
<dbReference type="PROSITE" id="PS01057">
    <property type="entry name" value="SAICAR_SYNTHETASE_1"/>
    <property type="match status" value="1"/>
</dbReference>
<dbReference type="PROSITE" id="PS01058">
    <property type="entry name" value="SAICAR_SYNTHETASE_2"/>
    <property type="match status" value="1"/>
</dbReference>